<dbReference type="EMBL" id="AC005479">
    <property type="status" value="NOT_ANNOTATED_CDS"/>
    <property type="molecule type" value="Genomic_DNA"/>
</dbReference>
<dbReference type="CCDS" id="CCDS41970.1"/>
<dbReference type="RefSeq" id="NP_001099049.1">
    <property type="nucleotide sequence ID" value="NM_001105579.2"/>
</dbReference>
<dbReference type="RefSeq" id="XP_016877089.1">
    <property type="nucleotide sequence ID" value="XM_017021600.2"/>
</dbReference>
<dbReference type="RefSeq" id="XP_054232590.1">
    <property type="nucleotide sequence ID" value="XM_054376615.1"/>
</dbReference>
<dbReference type="RefSeq" id="XP_054232591.1">
    <property type="nucleotide sequence ID" value="XM_054376616.1"/>
</dbReference>
<dbReference type="FunCoup" id="A6NDD5">
    <property type="interactions" value="74"/>
</dbReference>
<dbReference type="STRING" id="9606.ENSP00000331474"/>
<dbReference type="BioMuta" id="SYNDIG1L"/>
<dbReference type="MassIVE" id="A6NDD5"/>
<dbReference type="PaxDb" id="9606-ENSP00000331474"/>
<dbReference type="PeptideAtlas" id="A6NDD5"/>
<dbReference type="Antibodypedia" id="55451">
    <property type="antibodies" value="9 antibodies from 5 providers"/>
</dbReference>
<dbReference type="DNASU" id="646658"/>
<dbReference type="Ensembl" id="ENST00000331628.8">
    <property type="protein sequence ID" value="ENSP00000331474.3"/>
    <property type="gene ID" value="ENSG00000183379.9"/>
</dbReference>
<dbReference type="Ensembl" id="ENST00000554823.1">
    <property type="protein sequence ID" value="ENSP00000450439.1"/>
    <property type="gene ID" value="ENSG00000183379.9"/>
</dbReference>
<dbReference type="GeneID" id="646658"/>
<dbReference type="KEGG" id="hsa:646658"/>
<dbReference type="MANE-Select" id="ENST00000331628.8">
    <property type="protein sequence ID" value="ENSP00000331474.3"/>
    <property type="RefSeq nucleotide sequence ID" value="NM_001105579.2"/>
    <property type="RefSeq protein sequence ID" value="NP_001099049.1"/>
</dbReference>
<dbReference type="UCSC" id="uc001xpx.2">
    <property type="organism name" value="human"/>
</dbReference>
<dbReference type="AGR" id="HGNC:32388"/>
<dbReference type="CTD" id="646658"/>
<dbReference type="DisGeNET" id="646658"/>
<dbReference type="GeneCards" id="SYNDIG1L"/>
<dbReference type="HGNC" id="HGNC:32388">
    <property type="gene designation" value="SYNDIG1L"/>
</dbReference>
<dbReference type="HPA" id="ENSG00000183379">
    <property type="expression patterns" value="Tissue enriched (brain)"/>
</dbReference>
<dbReference type="MIM" id="609999">
    <property type="type" value="gene"/>
</dbReference>
<dbReference type="neXtProt" id="NX_A6NDD5"/>
<dbReference type="OpenTargets" id="ENSG00000183379"/>
<dbReference type="PharmGKB" id="PA144596263"/>
<dbReference type="VEuPathDB" id="HostDB:ENSG00000183379"/>
<dbReference type="eggNOG" id="ENOG502QPQE">
    <property type="taxonomic scope" value="Eukaryota"/>
</dbReference>
<dbReference type="GeneTree" id="ENSGT00950000183147"/>
<dbReference type="HOGENOM" id="CLU_094250_0_0_1"/>
<dbReference type="InParanoid" id="A6NDD5"/>
<dbReference type="OMA" id="KMKSQQF"/>
<dbReference type="OrthoDB" id="10018862at2759"/>
<dbReference type="PAN-GO" id="A6NDD5">
    <property type="GO annotations" value="2 GO annotations based on evolutionary models"/>
</dbReference>
<dbReference type="PhylomeDB" id="A6NDD5"/>
<dbReference type="TreeFam" id="TF331357"/>
<dbReference type="PathwayCommons" id="A6NDD5"/>
<dbReference type="SignaLink" id="A6NDD5"/>
<dbReference type="BioGRID-ORCS" id="646658">
    <property type="hits" value="12 hits in 1136 CRISPR screens"/>
</dbReference>
<dbReference type="ChiTaRS" id="SYNDIG1L">
    <property type="organism name" value="human"/>
</dbReference>
<dbReference type="GenomeRNAi" id="646658"/>
<dbReference type="Pharos" id="A6NDD5">
    <property type="development level" value="Tdark"/>
</dbReference>
<dbReference type="PRO" id="PR:A6NDD5"/>
<dbReference type="Proteomes" id="UP000005640">
    <property type="component" value="Chromosome 14"/>
</dbReference>
<dbReference type="RNAct" id="A6NDD5">
    <property type="molecule type" value="protein"/>
</dbReference>
<dbReference type="Bgee" id="ENSG00000183379">
    <property type="expression patterns" value="Expressed in putamen and 108 other cell types or tissues"/>
</dbReference>
<dbReference type="ExpressionAtlas" id="A6NDD5">
    <property type="expression patterns" value="baseline and differential"/>
</dbReference>
<dbReference type="GO" id="GO:0005794">
    <property type="term" value="C:Golgi apparatus"/>
    <property type="evidence" value="ECO:0007669"/>
    <property type="project" value="UniProtKB-SubCell"/>
</dbReference>
<dbReference type="GO" id="GO:0043231">
    <property type="term" value="C:intracellular membrane-bounded organelle"/>
    <property type="evidence" value="ECO:0000318"/>
    <property type="project" value="GO_Central"/>
</dbReference>
<dbReference type="GO" id="GO:0016020">
    <property type="term" value="C:membrane"/>
    <property type="evidence" value="ECO:0000318"/>
    <property type="project" value="GO_Central"/>
</dbReference>
<dbReference type="InterPro" id="IPR007593">
    <property type="entry name" value="CD225/Dispanin_fam"/>
</dbReference>
<dbReference type="PANTHER" id="PTHR14768:SF4">
    <property type="entry name" value="SYNAPSE DIFFERENTIATION-INDUCING GENE PROTEIN 1-LIKE"/>
    <property type="match status" value="1"/>
</dbReference>
<dbReference type="PANTHER" id="PTHR14768">
    <property type="entry name" value="UPF0338 PROTEIN"/>
    <property type="match status" value="1"/>
</dbReference>
<dbReference type="Pfam" id="PF04505">
    <property type="entry name" value="CD225"/>
    <property type="match status" value="1"/>
</dbReference>
<organism>
    <name type="scientific">Homo sapiens</name>
    <name type="common">Human</name>
    <dbReference type="NCBI Taxonomy" id="9606"/>
    <lineage>
        <taxon>Eukaryota</taxon>
        <taxon>Metazoa</taxon>
        <taxon>Chordata</taxon>
        <taxon>Craniata</taxon>
        <taxon>Vertebrata</taxon>
        <taxon>Euteleostomi</taxon>
        <taxon>Mammalia</taxon>
        <taxon>Eutheria</taxon>
        <taxon>Euarchontoglires</taxon>
        <taxon>Primates</taxon>
        <taxon>Haplorrhini</taxon>
        <taxon>Catarrhini</taxon>
        <taxon>Hominidae</taxon>
        <taxon>Homo</taxon>
    </lineage>
</organism>
<protein>
    <recommendedName>
        <fullName>Synapse differentiation-inducing gene protein 1-like</fullName>
    </recommendedName>
    <alternativeName>
        <fullName>Capucin</fullName>
    </alternativeName>
    <alternativeName>
        <fullName>Dispanin subfamily C member 1</fullName>
        <shortName>DSPC1</shortName>
    </alternativeName>
    <alternativeName>
        <fullName>Transmembrane protein 90A</fullName>
    </alternativeName>
</protein>
<comment type="subcellular location">
    <subcellularLocation>
        <location evidence="4">Membrane</location>
        <topology evidence="4">Multi-pass membrane protein</topology>
    </subcellularLocation>
    <subcellularLocation>
        <location evidence="1">Golgi apparatus</location>
        <location evidence="1">cis-Golgi network</location>
    </subcellularLocation>
</comment>
<comment type="similarity">
    <text evidence="4">Belongs to the CD225/Dispanin family.</text>
</comment>
<keyword id="KW-0333">Golgi apparatus</keyword>
<keyword id="KW-0472">Membrane</keyword>
<keyword id="KW-1185">Reference proteome</keyword>
<keyword id="KW-0812">Transmembrane</keyword>
<keyword id="KW-1133">Transmembrane helix</keyword>
<proteinExistence type="inferred from homology"/>
<gene>
    <name type="primary">SYNDIG1L</name>
    <name type="synonym">TMEM90A</name>
</gene>
<feature type="chain" id="PRO_0000332725" description="Synapse differentiation-inducing gene protein 1-like">
    <location>
        <begin position="1"/>
        <end position="238"/>
    </location>
</feature>
<feature type="topological domain" description="Extracellular" evidence="2">
    <location>
        <begin position="1"/>
        <end position="162"/>
    </location>
</feature>
<feature type="transmembrane region" description="Helical" evidence="2">
    <location>
        <begin position="163"/>
        <end position="183"/>
    </location>
</feature>
<feature type="topological domain" description="Cytoplasmic" evidence="2">
    <location>
        <begin position="184"/>
        <end position="205"/>
    </location>
</feature>
<feature type="transmembrane region" description="Helical" evidence="2">
    <location>
        <begin position="206"/>
        <end position="226"/>
    </location>
</feature>
<feature type="topological domain" description="Extracellular" evidence="2">
    <location>
        <begin position="227"/>
        <end position="238"/>
    </location>
</feature>
<feature type="region of interest" description="Disordered" evidence="3">
    <location>
        <begin position="1"/>
        <end position="29"/>
    </location>
</feature>
<feature type="region of interest" description="Disordered" evidence="3">
    <location>
        <begin position="83"/>
        <end position="111"/>
    </location>
</feature>
<feature type="region of interest" description="Disordered" evidence="3">
    <location>
        <begin position="127"/>
        <end position="154"/>
    </location>
</feature>
<feature type="compositionally biased region" description="Acidic residues" evidence="3">
    <location>
        <begin position="129"/>
        <end position="151"/>
    </location>
</feature>
<reference key="1">
    <citation type="journal article" date="2003" name="Nature">
        <title>The DNA sequence and analysis of human chromosome 14.</title>
        <authorList>
            <person name="Heilig R."/>
            <person name="Eckenberg R."/>
            <person name="Petit J.-L."/>
            <person name="Fonknechten N."/>
            <person name="Da Silva C."/>
            <person name="Cattolico L."/>
            <person name="Levy M."/>
            <person name="Barbe V."/>
            <person name="De Berardinis V."/>
            <person name="Ureta-Vidal A."/>
            <person name="Pelletier E."/>
            <person name="Vico V."/>
            <person name="Anthouard V."/>
            <person name="Rowen L."/>
            <person name="Madan A."/>
            <person name="Qin S."/>
            <person name="Sun H."/>
            <person name="Du H."/>
            <person name="Pepin K."/>
            <person name="Artiguenave F."/>
            <person name="Robert C."/>
            <person name="Cruaud C."/>
            <person name="Bruels T."/>
            <person name="Jaillon O."/>
            <person name="Friedlander L."/>
            <person name="Samson G."/>
            <person name="Brottier P."/>
            <person name="Cure S."/>
            <person name="Segurens B."/>
            <person name="Aniere F."/>
            <person name="Samain S."/>
            <person name="Crespeau H."/>
            <person name="Abbasi N."/>
            <person name="Aiach N."/>
            <person name="Boscus D."/>
            <person name="Dickhoff R."/>
            <person name="Dors M."/>
            <person name="Dubois I."/>
            <person name="Friedman C."/>
            <person name="Gouyvenoux M."/>
            <person name="James R."/>
            <person name="Madan A."/>
            <person name="Mairey-Estrada B."/>
            <person name="Mangenot S."/>
            <person name="Martins N."/>
            <person name="Menard M."/>
            <person name="Oztas S."/>
            <person name="Ratcliffe A."/>
            <person name="Shaffer T."/>
            <person name="Trask B."/>
            <person name="Vacherie B."/>
            <person name="Bellemere C."/>
            <person name="Belser C."/>
            <person name="Besnard-Gonnet M."/>
            <person name="Bartol-Mavel D."/>
            <person name="Boutard M."/>
            <person name="Briez-Silla S."/>
            <person name="Combette S."/>
            <person name="Dufosse-Laurent V."/>
            <person name="Ferron C."/>
            <person name="Lechaplais C."/>
            <person name="Louesse C."/>
            <person name="Muselet D."/>
            <person name="Magdelenat G."/>
            <person name="Pateau E."/>
            <person name="Petit E."/>
            <person name="Sirvain-Trukniewicz P."/>
            <person name="Trybou A."/>
            <person name="Vega-Czarny N."/>
            <person name="Bataille E."/>
            <person name="Bluet E."/>
            <person name="Bordelais I."/>
            <person name="Dubois M."/>
            <person name="Dumont C."/>
            <person name="Guerin T."/>
            <person name="Haffray S."/>
            <person name="Hammadi R."/>
            <person name="Muanga J."/>
            <person name="Pellouin V."/>
            <person name="Robert D."/>
            <person name="Wunderle E."/>
            <person name="Gauguet G."/>
            <person name="Roy A."/>
            <person name="Sainte-Marthe L."/>
            <person name="Verdier J."/>
            <person name="Verdier-Discala C."/>
            <person name="Hillier L.W."/>
            <person name="Fulton L."/>
            <person name="McPherson J."/>
            <person name="Matsuda F."/>
            <person name="Wilson R."/>
            <person name="Scarpelli C."/>
            <person name="Gyapay G."/>
            <person name="Wincker P."/>
            <person name="Saurin W."/>
            <person name="Quetier F."/>
            <person name="Waterston R."/>
            <person name="Hood L."/>
            <person name="Weissenbach J."/>
        </authorList>
    </citation>
    <scope>NUCLEOTIDE SEQUENCE [LARGE SCALE GENOMIC DNA]</scope>
</reference>
<reference key="2">
    <citation type="journal article" date="2006" name="Genomics">
        <title>Capucin: a novel striatal marker down-regulated in rodent models of Huntington disease.</title>
        <authorList>
            <person name="de Chaldee M."/>
            <person name="Brochier C."/>
            <person name="Van de Vel A."/>
            <person name="Caudy N."/>
            <person name="Luthi-Carter R."/>
            <person name="Gaillard M.-C."/>
            <person name="Elalouf J.-M."/>
        </authorList>
    </citation>
    <scope>IDENTIFICATION</scope>
</reference>
<reference key="3">
    <citation type="journal article" date="2012" name="PLoS ONE">
        <title>The dispanins: a novel gene family of ancient origin that contains 14 human members.</title>
        <authorList>
            <person name="Sallman Almen M."/>
            <person name="Bringeland N."/>
            <person name="Fredriksson R."/>
            <person name="Schioth H.B."/>
        </authorList>
    </citation>
    <scope>GENE FAMILY</scope>
</reference>
<sequence>MESLSELQNPLLPRSPAHLHGPYPYPETPPSWSCQEKLYSYLLGGAGPAGAHQLLDPGSLQLAVEAWYRPSCLLGRDKVKEPRAGSCETSFTEDREPQEGPPEQPTGPGQAAENVTIQTVSYGVQEELRDQEDDQEEEESDATSTESESEDNFLTLPPRDHLGLTLFSMLCCFWPLGIAAFYFSQGTSKAISKGDFRLASTTSRRALFLATLAIAVGAGLYVAVVVALAAYMSQNGHG</sequence>
<evidence type="ECO:0000250" key="1"/>
<evidence type="ECO:0000255" key="2"/>
<evidence type="ECO:0000256" key="3">
    <source>
        <dbReference type="SAM" id="MobiDB-lite"/>
    </source>
</evidence>
<evidence type="ECO:0000305" key="4"/>
<accession>A6NDD5</accession>
<name>SYN1L_HUMAN</name>